<keyword id="KW-0004">4Fe-4S</keyword>
<keyword id="KW-0249">Electron transport</keyword>
<keyword id="KW-0408">Iron</keyword>
<keyword id="KW-0411">Iron-sulfur</keyword>
<keyword id="KW-0479">Metal-binding</keyword>
<keyword id="KW-0500">Molybdenum</keyword>
<keyword id="KW-0534">Nitrate assimilation</keyword>
<keyword id="KW-0560">Oxidoreductase</keyword>
<keyword id="KW-0574">Periplasm</keyword>
<keyword id="KW-0732">Signal</keyword>
<keyword id="KW-0813">Transport</keyword>
<evidence type="ECO:0000255" key="1">
    <source>
        <dbReference type="HAMAP-Rule" id="MF_01630"/>
    </source>
</evidence>
<dbReference type="EC" id="1.9.6.1" evidence="1"/>
<dbReference type="EMBL" id="CP000886">
    <property type="protein sequence ID" value="ABX66158.1"/>
    <property type="molecule type" value="Genomic_DNA"/>
</dbReference>
<dbReference type="RefSeq" id="WP_000778090.1">
    <property type="nucleotide sequence ID" value="NC_010102.1"/>
</dbReference>
<dbReference type="SMR" id="A9N5G2"/>
<dbReference type="KEGG" id="spq:SPAB_00733"/>
<dbReference type="PATRIC" id="fig|1016998.12.peg.687"/>
<dbReference type="HOGENOM" id="CLU_000422_13_4_6"/>
<dbReference type="BioCyc" id="SENT1016998:SPAB_RS03035-MONOMER"/>
<dbReference type="Proteomes" id="UP000008556">
    <property type="component" value="Chromosome"/>
</dbReference>
<dbReference type="GO" id="GO:0016020">
    <property type="term" value="C:membrane"/>
    <property type="evidence" value="ECO:0007669"/>
    <property type="project" value="TreeGrafter"/>
</dbReference>
<dbReference type="GO" id="GO:0009325">
    <property type="term" value="C:nitrate reductase complex"/>
    <property type="evidence" value="ECO:0007669"/>
    <property type="project" value="TreeGrafter"/>
</dbReference>
<dbReference type="GO" id="GO:0042597">
    <property type="term" value="C:periplasmic space"/>
    <property type="evidence" value="ECO:0007669"/>
    <property type="project" value="UniProtKB-SubCell"/>
</dbReference>
<dbReference type="GO" id="GO:0051539">
    <property type="term" value="F:4 iron, 4 sulfur cluster binding"/>
    <property type="evidence" value="ECO:0007669"/>
    <property type="project" value="UniProtKB-KW"/>
</dbReference>
<dbReference type="GO" id="GO:0009055">
    <property type="term" value="F:electron transfer activity"/>
    <property type="evidence" value="ECO:0007669"/>
    <property type="project" value="UniProtKB-UniRule"/>
</dbReference>
<dbReference type="GO" id="GO:0005506">
    <property type="term" value="F:iron ion binding"/>
    <property type="evidence" value="ECO:0007669"/>
    <property type="project" value="UniProtKB-UniRule"/>
</dbReference>
<dbReference type="GO" id="GO:0030151">
    <property type="term" value="F:molybdenum ion binding"/>
    <property type="evidence" value="ECO:0007669"/>
    <property type="project" value="InterPro"/>
</dbReference>
<dbReference type="GO" id="GO:0043546">
    <property type="term" value="F:molybdopterin cofactor binding"/>
    <property type="evidence" value="ECO:0007669"/>
    <property type="project" value="InterPro"/>
</dbReference>
<dbReference type="GO" id="GO:0050140">
    <property type="term" value="F:nitrate reductase (cytochrome) activity"/>
    <property type="evidence" value="ECO:0007669"/>
    <property type="project" value="UniProtKB-EC"/>
</dbReference>
<dbReference type="GO" id="GO:0045333">
    <property type="term" value="P:cellular respiration"/>
    <property type="evidence" value="ECO:0007669"/>
    <property type="project" value="UniProtKB-ARBA"/>
</dbReference>
<dbReference type="GO" id="GO:0006777">
    <property type="term" value="P:Mo-molybdopterin cofactor biosynthetic process"/>
    <property type="evidence" value="ECO:0007669"/>
    <property type="project" value="UniProtKB-UniRule"/>
</dbReference>
<dbReference type="GO" id="GO:0042128">
    <property type="term" value="P:nitrate assimilation"/>
    <property type="evidence" value="ECO:0007669"/>
    <property type="project" value="UniProtKB-UniRule"/>
</dbReference>
<dbReference type="CDD" id="cd02791">
    <property type="entry name" value="MopB_CT_Nitrate-R-NapA-like"/>
    <property type="match status" value="1"/>
</dbReference>
<dbReference type="CDD" id="cd02754">
    <property type="entry name" value="MopB_Nitrate-R-NapA-like"/>
    <property type="match status" value="1"/>
</dbReference>
<dbReference type="FunFam" id="2.40.40.20:FF:000005">
    <property type="entry name" value="Periplasmic nitrate reductase"/>
    <property type="match status" value="1"/>
</dbReference>
<dbReference type="FunFam" id="3.40.228.10:FF:000001">
    <property type="entry name" value="Periplasmic nitrate reductase"/>
    <property type="match status" value="1"/>
</dbReference>
<dbReference type="Gene3D" id="2.40.40.20">
    <property type="match status" value="1"/>
</dbReference>
<dbReference type="Gene3D" id="3.30.200.210">
    <property type="match status" value="1"/>
</dbReference>
<dbReference type="Gene3D" id="3.40.50.740">
    <property type="match status" value="1"/>
</dbReference>
<dbReference type="Gene3D" id="3.40.228.10">
    <property type="entry name" value="Dimethylsulfoxide Reductase, domain 2"/>
    <property type="match status" value="1"/>
</dbReference>
<dbReference type="HAMAP" id="MF_01630">
    <property type="entry name" value="Nitrate_reduct_NapA"/>
    <property type="match status" value="1"/>
</dbReference>
<dbReference type="InterPro" id="IPR009010">
    <property type="entry name" value="Asp_de-COase-like_dom_sf"/>
</dbReference>
<dbReference type="InterPro" id="IPR041957">
    <property type="entry name" value="CT_Nitrate-R-NapA-like"/>
</dbReference>
<dbReference type="InterPro" id="IPR006657">
    <property type="entry name" value="MoPterin_dinucl-bd_dom"/>
</dbReference>
<dbReference type="InterPro" id="IPR006656">
    <property type="entry name" value="Mopterin_OxRdtase"/>
</dbReference>
<dbReference type="InterPro" id="IPR006963">
    <property type="entry name" value="Mopterin_OxRdtase_4Fe-4S_dom"/>
</dbReference>
<dbReference type="InterPro" id="IPR027467">
    <property type="entry name" value="MopterinOxRdtase_cofactor_BS"/>
</dbReference>
<dbReference type="InterPro" id="IPR010051">
    <property type="entry name" value="Periplasm_NO3_reductase_lsu"/>
</dbReference>
<dbReference type="InterPro" id="IPR050123">
    <property type="entry name" value="Prok_molybdopt-oxidoreductase"/>
</dbReference>
<dbReference type="InterPro" id="IPR006311">
    <property type="entry name" value="TAT_signal"/>
</dbReference>
<dbReference type="InterPro" id="IPR019546">
    <property type="entry name" value="TAT_signal_bac_arc"/>
</dbReference>
<dbReference type="NCBIfam" id="TIGR01706">
    <property type="entry name" value="NAPA"/>
    <property type="match status" value="1"/>
</dbReference>
<dbReference type="NCBIfam" id="NF010055">
    <property type="entry name" value="PRK13532.1"/>
    <property type="match status" value="1"/>
</dbReference>
<dbReference type="NCBIfam" id="TIGR01409">
    <property type="entry name" value="TAT_signal_seq"/>
    <property type="match status" value="1"/>
</dbReference>
<dbReference type="PANTHER" id="PTHR43105:SF11">
    <property type="entry name" value="PERIPLASMIC NITRATE REDUCTASE"/>
    <property type="match status" value="1"/>
</dbReference>
<dbReference type="PANTHER" id="PTHR43105">
    <property type="entry name" value="RESPIRATORY NITRATE REDUCTASE"/>
    <property type="match status" value="1"/>
</dbReference>
<dbReference type="Pfam" id="PF04879">
    <property type="entry name" value="Molybdop_Fe4S4"/>
    <property type="match status" value="1"/>
</dbReference>
<dbReference type="Pfam" id="PF00384">
    <property type="entry name" value="Molybdopterin"/>
    <property type="match status" value="1"/>
</dbReference>
<dbReference type="Pfam" id="PF01568">
    <property type="entry name" value="Molydop_binding"/>
    <property type="match status" value="1"/>
</dbReference>
<dbReference type="SMART" id="SM00926">
    <property type="entry name" value="Molybdop_Fe4S4"/>
    <property type="match status" value="1"/>
</dbReference>
<dbReference type="SUPFAM" id="SSF50692">
    <property type="entry name" value="ADC-like"/>
    <property type="match status" value="1"/>
</dbReference>
<dbReference type="SUPFAM" id="SSF53706">
    <property type="entry name" value="Formate dehydrogenase/DMSO reductase, domains 1-3"/>
    <property type="match status" value="1"/>
</dbReference>
<dbReference type="PROSITE" id="PS51669">
    <property type="entry name" value="4FE4S_MOW_BIS_MGD"/>
    <property type="match status" value="1"/>
</dbReference>
<dbReference type="PROSITE" id="PS00551">
    <property type="entry name" value="MOLYBDOPTERIN_PROK_1"/>
    <property type="match status" value="1"/>
</dbReference>
<dbReference type="PROSITE" id="PS51318">
    <property type="entry name" value="TAT"/>
    <property type="match status" value="1"/>
</dbReference>
<name>NAPA_SALPB</name>
<accession>A9N5G2</accession>
<protein>
    <recommendedName>
        <fullName evidence="1">Periplasmic nitrate reductase</fullName>
        <ecNumber evidence="1">1.9.6.1</ecNumber>
    </recommendedName>
</protein>
<reference key="1">
    <citation type="submission" date="2007-11" db="EMBL/GenBank/DDBJ databases">
        <authorList>
            <consortium name="The Salmonella enterica serovar Paratyphi B Genome Sequencing Project"/>
            <person name="McClelland M."/>
            <person name="Sanderson E.K."/>
            <person name="Porwollik S."/>
            <person name="Spieth J."/>
            <person name="Clifton W.S."/>
            <person name="Fulton R."/>
            <person name="Cordes M."/>
            <person name="Wollam A."/>
            <person name="Shah N."/>
            <person name="Pepin K."/>
            <person name="Bhonagiri V."/>
            <person name="Nash W."/>
            <person name="Johnson M."/>
            <person name="Thiruvilangam P."/>
            <person name="Wilson R."/>
        </authorList>
    </citation>
    <scope>NUCLEOTIDE SEQUENCE [LARGE SCALE GENOMIC DNA]</scope>
    <source>
        <strain>ATCC BAA-1250 / SPB7</strain>
    </source>
</reference>
<feature type="signal peptide" description="Tat-type signal" evidence="1">
    <location>
        <begin position="1"/>
        <end position="31"/>
    </location>
</feature>
<feature type="chain" id="PRO_1000088119" description="Periplasmic nitrate reductase" evidence="1">
    <location>
        <begin position="32"/>
        <end position="828"/>
    </location>
</feature>
<feature type="domain" description="4Fe-4S Mo/W bis-MGD-type" evidence="1">
    <location>
        <begin position="39"/>
        <end position="95"/>
    </location>
</feature>
<feature type="binding site" evidence="1">
    <location>
        <position position="46"/>
    </location>
    <ligand>
        <name>[4Fe-4S] cluster</name>
        <dbReference type="ChEBI" id="CHEBI:49883"/>
    </ligand>
</feature>
<feature type="binding site" evidence="1">
    <location>
        <position position="49"/>
    </location>
    <ligand>
        <name>[4Fe-4S] cluster</name>
        <dbReference type="ChEBI" id="CHEBI:49883"/>
    </ligand>
</feature>
<feature type="binding site" evidence="1">
    <location>
        <position position="53"/>
    </location>
    <ligand>
        <name>[4Fe-4S] cluster</name>
        <dbReference type="ChEBI" id="CHEBI:49883"/>
    </ligand>
</feature>
<feature type="binding site" evidence="1">
    <location>
        <position position="81"/>
    </location>
    <ligand>
        <name>[4Fe-4S] cluster</name>
        <dbReference type="ChEBI" id="CHEBI:49883"/>
    </ligand>
</feature>
<feature type="binding site" evidence="1">
    <location>
        <position position="83"/>
    </location>
    <ligand>
        <name>Mo-bis(molybdopterin guanine dinucleotide)</name>
        <dbReference type="ChEBI" id="CHEBI:60539"/>
    </ligand>
</feature>
<feature type="binding site" evidence="1">
    <location>
        <position position="150"/>
    </location>
    <ligand>
        <name>Mo-bis(molybdopterin guanine dinucleotide)</name>
        <dbReference type="ChEBI" id="CHEBI:60539"/>
    </ligand>
</feature>
<feature type="binding site" evidence="1">
    <location>
        <position position="175"/>
    </location>
    <ligand>
        <name>Mo-bis(molybdopterin guanine dinucleotide)</name>
        <dbReference type="ChEBI" id="CHEBI:60539"/>
    </ligand>
</feature>
<feature type="binding site" evidence="1">
    <location>
        <position position="179"/>
    </location>
    <ligand>
        <name>Mo-bis(molybdopterin guanine dinucleotide)</name>
        <dbReference type="ChEBI" id="CHEBI:60539"/>
    </ligand>
</feature>
<feature type="binding site" evidence="1">
    <location>
        <begin position="212"/>
        <end position="219"/>
    </location>
    <ligand>
        <name>Mo-bis(molybdopterin guanine dinucleotide)</name>
        <dbReference type="ChEBI" id="CHEBI:60539"/>
    </ligand>
</feature>
<feature type="binding site" evidence="1">
    <location>
        <begin position="243"/>
        <end position="247"/>
    </location>
    <ligand>
        <name>Mo-bis(molybdopterin guanine dinucleotide)</name>
        <dbReference type="ChEBI" id="CHEBI:60539"/>
    </ligand>
</feature>
<feature type="binding site" evidence="1">
    <location>
        <begin position="262"/>
        <end position="264"/>
    </location>
    <ligand>
        <name>Mo-bis(molybdopterin guanine dinucleotide)</name>
        <dbReference type="ChEBI" id="CHEBI:60539"/>
    </ligand>
</feature>
<feature type="binding site" evidence="1">
    <location>
        <position position="372"/>
    </location>
    <ligand>
        <name>Mo-bis(molybdopterin guanine dinucleotide)</name>
        <dbReference type="ChEBI" id="CHEBI:60539"/>
    </ligand>
</feature>
<feature type="binding site" evidence="1">
    <location>
        <position position="376"/>
    </location>
    <ligand>
        <name>Mo-bis(molybdopterin guanine dinucleotide)</name>
        <dbReference type="ChEBI" id="CHEBI:60539"/>
    </ligand>
</feature>
<feature type="binding site" evidence="1">
    <location>
        <position position="482"/>
    </location>
    <ligand>
        <name>Mo-bis(molybdopterin guanine dinucleotide)</name>
        <dbReference type="ChEBI" id="CHEBI:60539"/>
    </ligand>
</feature>
<feature type="binding site" evidence="1">
    <location>
        <begin position="508"/>
        <end position="509"/>
    </location>
    <ligand>
        <name>Mo-bis(molybdopterin guanine dinucleotide)</name>
        <dbReference type="ChEBI" id="CHEBI:60539"/>
    </ligand>
</feature>
<feature type="binding site" evidence="1">
    <location>
        <position position="531"/>
    </location>
    <ligand>
        <name>Mo-bis(molybdopterin guanine dinucleotide)</name>
        <dbReference type="ChEBI" id="CHEBI:60539"/>
    </ligand>
</feature>
<feature type="binding site" evidence="1">
    <location>
        <position position="558"/>
    </location>
    <ligand>
        <name>Mo-bis(molybdopterin guanine dinucleotide)</name>
        <dbReference type="ChEBI" id="CHEBI:60539"/>
    </ligand>
</feature>
<feature type="binding site" evidence="1">
    <location>
        <begin position="718"/>
        <end position="727"/>
    </location>
    <ligand>
        <name>Mo-bis(molybdopterin guanine dinucleotide)</name>
        <dbReference type="ChEBI" id="CHEBI:60539"/>
    </ligand>
</feature>
<feature type="binding site" evidence="1">
    <location>
        <position position="794"/>
    </location>
    <ligand>
        <name>substrate</name>
    </ligand>
</feature>
<feature type="binding site" evidence="1">
    <location>
        <position position="802"/>
    </location>
    <ligand>
        <name>Mo-bis(molybdopterin guanine dinucleotide)</name>
        <dbReference type="ChEBI" id="CHEBI:60539"/>
    </ligand>
</feature>
<feature type="binding site" evidence="1">
    <location>
        <position position="819"/>
    </location>
    <ligand>
        <name>Mo-bis(molybdopterin guanine dinucleotide)</name>
        <dbReference type="ChEBI" id="CHEBI:60539"/>
    </ligand>
</feature>
<sequence length="828" mass="92858">MKLSRRSFMKANAVAAAAAAAGLSVPGVARAVVGQQEAIKWDKAPCRFCGTGCGVLVGTQQGRVVACQGDPDAPVNRGLNCIKGYFLPKIMYGKDRLTQPMLRMKDGSYHKDGEFTPVSWEQAFDVMEEKFKTALKEKGPEAIGMFGSGQWTIWEGYAAAKLFKAGFRSNNIDPNARHCMASAVVGFMRTFGMDEPMGCYDDIEQADAFVLWGSNMAEMHPILWSRITNRRLSDPNVKVAVLSTFQHRSFELADNGIVFTPQSDLVILNYIANYIIQNNAVNQDFFTKHVNLRKGATDIGYGLRPTHPLEKAAKNPGSDASEPMSFDEYKAFVAEYTLDKTAEMTGVPKDQLEQLAQLYADPNKRVISYWTMGFNQHTRGVWANNLVYNLHLLTGKISQPGCGPFSLTGQPSACGTAREVGTFSHRLPADMVVTNEKHRDICEKHWQIPAGTIPAKVGLHAVAQDRALKDGKLNVYWVMCNNNMQAGPNINEDRMPGWRDPRNFIIVSDPYPTVSALSADLILPTAMWVEKEGAYGNAERRTQFWRQQIKAPGEAKSDLWQLVQFSRRFKTEEVWPEALLAQKPELRGKTLYDVLFATPAVSKFPLSELKEDQLNDESRELGFYLQKGLFEEYAWFGRGHGHDLAPFDDYHNARGLRWPVVEGKETQWRYSEGNDPYVKAGEGYKFYGKPDGKAVIFALPFEPAAESPDNEYDLWLSTGRVLEHWHTGSMTRRVPELHRAFPEAVVFIHPLDAKARDLRRGDKVKVSSRRGEVISIVETRGRNRPPQGLVYMPFFDAAQLVNNLTLDATDPLSKETDFKKCAVKLAKV</sequence>
<proteinExistence type="inferred from homology"/>
<gene>
    <name evidence="1" type="primary">napA</name>
    <name type="ordered locus">SPAB_00733</name>
</gene>
<comment type="function">
    <text evidence="1">Catalytic subunit of the periplasmic nitrate reductase complex NapAB. Receives electrons from NapB and catalyzes the reduction of nitrate to nitrite.</text>
</comment>
<comment type="catalytic activity">
    <reaction evidence="1">
        <text>2 Fe(II)-[cytochrome] + nitrate + 2 H(+) = 2 Fe(III)-[cytochrome] + nitrite + H2O</text>
        <dbReference type="Rhea" id="RHEA:12909"/>
        <dbReference type="Rhea" id="RHEA-COMP:11777"/>
        <dbReference type="Rhea" id="RHEA-COMP:11778"/>
        <dbReference type="ChEBI" id="CHEBI:15377"/>
        <dbReference type="ChEBI" id="CHEBI:15378"/>
        <dbReference type="ChEBI" id="CHEBI:16301"/>
        <dbReference type="ChEBI" id="CHEBI:17632"/>
        <dbReference type="ChEBI" id="CHEBI:29033"/>
        <dbReference type="ChEBI" id="CHEBI:29034"/>
        <dbReference type="EC" id="1.9.6.1"/>
    </reaction>
</comment>
<comment type="cofactor">
    <cofactor evidence="1">
        <name>[4Fe-4S] cluster</name>
        <dbReference type="ChEBI" id="CHEBI:49883"/>
    </cofactor>
    <text evidence="1">Binds 1 [4Fe-4S] cluster.</text>
</comment>
<comment type="cofactor">
    <cofactor evidence="1">
        <name>Mo-bis(molybdopterin guanine dinucleotide)</name>
        <dbReference type="ChEBI" id="CHEBI:60539"/>
    </cofactor>
    <text evidence="1">Binds 1 molybdenum-bis(molybdopterin guanine dinucleotide) (Mo-bis-MGD) cofactor per subunit.</text>
</comment>
<comment type="subunit">
    <text evidence="1">Component of the periplasmic nitrate reductase NapAB complex composed of NapA and NapB.</text>
</comment>
<comment type="subcellular location">
    <subcellularLocation>
        <location evidence="1">Periplasm</location>
    </subcellularLocation>
</comment>
<comment type="PTM">
    <text evidence="1">Predicted to be exported by the Tat system. The position of the signal peptide cleavage has not been experimentally proven.</text>
</comment>
<comment type="similarity">
    <text evidence="1">Belongs to the prokaryotic molybdopterin-containing oxidoreductase family. NasA/NapA/NarB subfamily.</text>
</comment>
<organism>
    <name type="scientific">Salmonella paratyphi B (strain ATCC BAA-1250 / SPB7)</name>
    <dbReference type="NCBI Taxonomy" id="1016998"/>
    <lineage>
        <taxon>Bacteria</taxon>
        <taxon>Pseudomonadati</taxon>
        <taxon>Pseudomonadota</taxon>
        <taxon>Gammaproteobacteria</taxon>
        <taxon>Enterobacterales</taxon>
        <taxon>Enterobacteriaceae</taxon>
        <taxon>Salmonella</taxon>
    </lineage>
</organism>